<dbReference type="EC" id="3.2.1.35"/>
<dbReference type="EMBL" id="L13781">
    <property type="status" value="NOT_ANNOTATED_CDS"/>
    <property type="molecule type" value="mRNA"/>
</dbReference>
<dbReference type="EMBL" id="S67798">
    <property type="protein sequence ID" value="AAC60607.2"/>
    <property type="molecule type" value="mRNA"/>
</dbReference>
<dbReference type="EMBL" id="X84347">
    <property type="protein sequence ID" value="CAA59086.1"/>
    <property type="molecule type" value="mRNA"/>
</dbReference>
<dbReference type="EMBL" id="AC004690">
    <property type="protein sequence ID" value="AAQ96882.1"/>
    <property type="molecule type" value="Genomic_DNA"/>
</dbReference>
<dbReference type="EMBL" id="CH236947">
    <property type="protein sequence ID" value="EAL24329.1"/>
    <property type="molecule type" value="Genomic_DNA"/>
</dbReference>
<dbReference type="EMBL" id="CH471070">
    <property type="protein sequence ID" value="EAW83606.1"/>
    <property type="molecule type" value="Genomic_DNA"/>
</dbReference>
<dbReference type="EMBL" id="BC026163">
    <property type="protein sequence ID" value="AAH26163.1"/>
    <property type="molecule type" value="mRNA"/>
</dbReference>
<dbReference type="CCDS" id="CCDS5790.1">
    <molecule id="P38567-2"/>
</dbReference>
<dbReference type="CCDS" id="CCDS5791.1">
    <molecule id="P38567-1"/>
</dbReference>
<dbReference type="PIR" id="S40465">
    <property type="entry name" value="S40465"/>
</dbReference>
<dbReference type="RefSeq" id="NP_001167515.1">
    <molecule id="P38567-1"/>
    <property type="nucleotide sequence ID" value="NM_001174044.2"/>
</dbReference>
<dbReference type="RefSeq" id="NP_001167516.1">
    <molecule id="P38567-1"/>
    <property type="nucleotide sequence ID" value="NM_001174045.2"/>
</dbReference>
<dbReference type="RefSeq" id="NP_001167517.1">
    <molecule id="P38567-1"/>
    <property type="nucleotide sequence ID" value="NM_001174046.2"/>
</dbReference>
<dbReference type="RefSeq" id="NP_003108.2">
    <molecule id="P38567-2"/>
    <property type="nucleotide sequence ID" value="NM_003117.4"/>
</dbReference>
<dbReference type="RefSeq" id="NP_694859.1">
    <molecule id="P38567-1"/>
    <property type="nucleotide sequence ID" value="NM_153189.3"/>
</dbReference>
<dbReference type="PDB" id="9JUB">
    <property type="method" value="EM"/>
    <property type="resolution" value="3.10 A"/>
    <property type="chains" value="A=37-442"/>
</dbReference>
<dbReference type="PDBsum" id="9JUB"/>
<dbReference type="EMDB" id="EMD-61826"/>
<dbReference type="SMR" id="P38567"/>
<dbReference type="BioGRID" id="112559">
    <property type="interactions" value="1"/>
</dbReference>
<dbReference type="FunCoup" id="P38567">
    <property type="interactions" value="151"/>
</dbReference>
<dbReference type="STRING" id="9606.ENSP00000345849"/>
<dbReference type="DrugBank" id="DB08818">
    <property type="generic name" value="Hyaluronic acid"/>
</dbReference>
<dbReference type="CAZy" id="GH56">
    <property type="family name" value="Glycoside Hydrolase Family 56"/>
</dbReference>
<dbReference type="GlyCosmos" id="P38567">
    <property type="glycosylation" value="6 sites, No reported glycans"/>
</dbReference>
<dbReference type="GlyGen" id="P38567">
    <property type="glycosylation" value="6 sites"/>
</dbReference>
<dbReference type="iPTMnet" id="P38567"/>
<dbReference type="PhosphoSitePlus" id="P38567"/>
<dbReference type="BioMuta" id="SPAM1"/>
<dbReference type="DMDM" id="585673"/>
<dbReference type="MassIVE" id="P38567"/>
<dbReference type="PaxDb" id="9606-ENSP00000345849"/>
<dbReference type="PeptideAtlas" id="P38567"/>
<dbReference type="ProteomicsDB" id="55298">
    <molecule id="P38567-1"/>
</dbReference>
<dbReference type="ProteomicsDB" id="55299">
    <molecule id="P38567-2"/>
</dbReference>
<dbReference type="Antibodypedia" id="2991">
    <property type="antibodies" value="173 antibodies from 25 providers"/>
</dbReference>
<dbReference type="DNASU" id="6677"/>
<dbReference type="Ensembl" id="ENST00000223028.11">
    <molecule id="P38567-1"/>
    <property type="protein sequence ID" value="ENSP00000223028.7"/>
    <property type="gene ID" value="ENSG00000106304.16"/>
</dbReference>
<dbReference type="Ensembl" id="ENST00000340011.9">
    <molecule id="P38567-2"/>
    <property type="protein sequence ID" value="ENSP00000345849.5"/>
    <property type="gene ID" value="ENSG00000106304.16"/>
</dbReference>
<dbReference type="Ensembl" id="ENST00000402183.3">
    <molecule id="P38567-2"/>
    <property type="protein sequence ID" value="ENSP00000386028.3"/>
    <property type="gene ID" value="ENSG00000106304.16"/>
</dbReference>
<dbReference type="Ensembl" id="ENST00000439500.5">
    <molecule id="P38567-1"/>
    <property type="protein sequence ID" value="ENSP00000402123.1"/>
    <property type="gene ID" value="ENSG00000106304.16"/>
</dbReference>
<dbReference type="Ensembl" id="ENST00000460182.5">
    <molecule id="P38567-1"/>
    <property type="protein sequence ID" value="ENSP00000417934.1"/>
    <property type="gene ID" value="ENSG00000106304.16"/>
</dbReference>
<dbReference type="Ensembl" id="ENST00000682466.1">
    <molecule id="P38567-1"/>
    <property type="protein sequence ID" value="ENSP00000508393.1"/>
    <property type="gene ID" value="ENSG00000106304.16"/>
</dbReference>
<dbReference type="GeneID" id="6677"/>
<dbReference type="KEGG" id="hsa:6677"/>
<dbReference type="MANE-Select" id="ENST00000682466.1">
    <property type="protein sequence ID" value="ENSP00000508393.1"/>
    <property type="RefSeq nucleotide sequence ID" value="NM_153189.3"/>
    <property type="RefSeq protein sequence ID" value="NP_694859.1"/>
</dbReference>
<dbReference type="UCSC" id="uc003vle.4">
    <molecule id="P38567-1"/>
    <property type="organism name" value="human"/>
</dbReference>
<dbReference type="AGR" id="HGNC:11217"/>
<dbReference type="CTD" id="6677"/>
<dbReference type="DisGeNET" id="6677"/>
<dbReference type="GeneCards" id="SPAM1"/>
<dbReference type="HGNC" id="HGNC:11217">
    <property type="gene designation" value="SPAM1"/>
</dbReference>
<dbReference type="HPA" id="ENSG00000106304">
    <property type="expression patterns" value="Tissue enriched (testis)"/>
</dbReference>
<dbReference type="MIM" id="600930">
    <property type="type" value="gene"/>
</dbReference>
<dbReference type="neXtProt" id="NX_P38567"/>
<dbReference type="OpenTargets" id="ENSG00000106304"/>
<dbReference type="PharmGKB" id="PA36053"/>
<dbReference type="VEuPathDB" id="HostDB:ENSG00000106304"/>
<dbReference type="eggNOG" id="ENOG502R6HD">
    <property type="taxonomic scope" value="Eukaryota"/>
</dbReference>
<dbReference type="GeneTree" id="ENSGT01020000230364"/>
<dbReference type="HOGENOM" id="CLU_036366_0_1_1"/>
<dbReference type="InParanoid" id="P38567"/>
<dbReference type="OMA" id="RAKIVFE"/>
<dbReference type="OrthoDB" id="5796153at2759"/>
<dbReference type="PAN-GO" id="P38567">
    <property type="GO annotations" value="3 GO annotations based on evolutionary models"/>
</dbReference>
<dbReference type="PhylomeDB" id="P38567"/>
<dbReference type="TreeFam" id="TF321598"/>
<dbReference type="BioCyc" id="MetaCyc:HS02884-MONOMER"/>
<dbReference type="BRENDA" id="3.2.1.35">
    <property type="organism ID" value="2681"/>
</dbReference>
<dbReference type="PathwayCommons" id="P38567"/>
<dbReference type="Reactome" id="R-HSA-2534343">
    <property type="pathway name" value="Interaction With Cumulus Cells And The Zona Pellucida"/>
</dbReference>
<dbReference type="BioGRID-ORCS" id="6677">
    <property type="hits" value="7 hits in 1134 CRISPR screens"/>
</dbReference>
<dbReference type="GeneWiki" id="SPAM1"/>
<dbReference type="GenomeRNAi" id="6677"/>
<dbReference type="Pharos" id="P38567">
    <property type="development level" value="Tbio"/>
</dbReference>
<dbReference type="PRO" id="PR:P38567"/>
<dbReference type="Proteomes" id="UP000005640">
    <property type="component" value="Chromosome 7"/>
</dbReference>
<dbReference type="RNAct" id="P38567">
    <property type="molecule type" value="protein"/>
</dbReference>
<dbReference type="Bgee" id="ENSG00000106304">
    <property type="expression patterns" value="Expressed in sperm and 25 other cell types or tissues"/>
</dbReference>
<dbReference type="ExpressionAtlas" id="P38567">
    <property type="expression patterns" value="baseline and differential"/>
</dbReference>
<dbReference type="GO" id="GO:0001669">
    <property type="term" value="C:acrosomal vesicle"/>
    <property type="evidence" value="ECO:0000318"/>
    <property type="project" value="GO_Central"/>
</dbReference>
<dbReference type="GO" id="GO:0005886">
    <property type="term" value="C:plasma membrane"/>
    <property type="evidence" value="ECO:0000304"/>
    <property type="project" value="Reactome"/>
</dbReference>
<dbReference type="GO" id="GO:0098552">
    <property type="term" value="C:side of membrane"/>
    <property type="evidence" value="ECO:0007669"/>
    <property type="project" value="UniProtKB-KW"/>
</dbReference>
<dbReference type="GO" id="GO:0004415">
    <property type="term" value="F:hyalurononglucosaminidase activity"/>
    <property type="evidence" value="ECO:0000318"/>
    <property type="project" value="GO_Central"/>
</dbReference>
<dbReference type="GO" id="GO:0007339">
    <property type="term" value="P:binding of sperm to zona pellucida"/>
    <property type="evidence" value="ECO:0000304"/>
    <property type="project" value="ProtInc"/>
</dbReference>
<dbReference type="GO" id="GO:0005975">
    <property type="term" value="P:carbohydrate metabolic process"/>
    <property type="evidence" value="ECO:0000304"/>
    <property type="project" value="ProtInc"/>
</dbReference>
<dbReference type="GO" id="GO:0007155">
    <property type="term" value="P:cell adhesion"/>
    <property type="evidence" value="ECO:0007669"/>
    <property type="project" value="UniProtKB-KW"/>
</dbReference>
<dbReference type="GO" id="GO:0007342">
    <property type="term" value="P:fusion of sperm to egg plasma membrane involved in single fertilization"/>
    <property type="evidence" value="ECO:0007669"/>
    <property type="project" value="InterPro"/>
</dbReference>
<dbReference type="GO" id="GO:0030214">
    <property type="term" value="P:hyaluronan catabolic process"/>
    <property type="evidence" value="ECO:0000318"/>
    <property type="project" value="GO_Central"/>
</dbReference>
<dbReference type="FunFam" id="3.20.20.70:FF:000065">
    <property type="entry name" value="Hyaluronidase"/>
    <property type="match status" value="1"/>
</dbReference>
<dbReference type="Gene3D" id="3.20.20.70">
    <property type="entry name" value="Aldolase class I"/>
    <property type="match status" value="1"/>
</dbReference>
<dbReference type="InterPro" id="IPR013785">
    <property type="entry name" value="Aldolase_TIM"/>
</dbReference>
<dbReference type="InterPro" id="IPR017853">
    <property type="entry name" value="Glycoside_hydrolase_SF"/>
</dbReference>
<dbReference type="InterPro" id="IPR018155">
    <property type="entry name" value="Hyaluronidase"/>
</dbReference>
<dbReference type="InterPro" id="IPR001439">
    <property type="entry name" value="Hyaluronidase_PH20/Hyal5"/>
</dbReference>
<dbReference type="PANTHER" id="PTHR11769">
    <property type="entry name" value="HYALURONIDASE"/>
    <property type="match status" value="1"/>
</dbReference>
<dbReference type="PANTHER" id="PTHR11769:SF20">
    <property type="entry name" value="HYALURONIDASE PH-20"/>
    <property type="match status" value="1"/>
</dbReference>
<dbReference type="Pfam" id="PF01630">
    <property type="entry name" value="Glyco_hydro_56"/>
    <property type="match status" value="1"/>
</dbReference>
<dbReference type="PIRSF" id="PIRSF038193">
    <property type="entry name" value="Hyaluronidase"/>
    <property type="match status" value="1"/>
</dbReference>
<dbReference type="PIRSF" id="PIRSF500773">
    <property type="entry name" value="Hyaluronidase_PH20_Hyal5"/>
    <property type="match status" value="1"/>
</dbReference>
<dbReference type="PRINTS" id="PR00846">
    <property type="entry name" value="GLHYDRLASE56"/>
</dbReference>
<dbReference type="PRINTS" id="PR00848">
    <property type="entry name" value="SPERMPH20"/>
</dbReference>
<dbReference type="SUPFAM" id="SSF51445">
    <property type="entry name" value="(Trans)glycosidases"/>
    <property type="match status" value="1"/>
</dbReference>
<feature type="signal peptide" evidence="1">
    <location>
        <begin position="1"/>
        <end position="35"/>
    </location>
</feature>
<feature type="chain" id="PRO_0000012089" description="Hyaluronidase PH-20">
    <location>
        <begin position="36"/>
        <end position="490"/>
    </location>
</feature>
<feature type="propeptide" id="PRO_0000012090" description="Removed in mature form" evidence="2">
    <location>
        <begin position="491"/>
        <end position="509"/>
    </location>
</feature>
<feature type="active site" description="Proton donor" evidence="1">
    <location>
        <position position="148"/>
    </location>
</feature>
<feature type="lipid moiety-binding region" description="GPI-anchor amidated serine" evidence="2">
    <location>
        <position position="490"/>
    </location>
</feature>
<feature type="glycosylation site" description="N-linked (GlcNAc...) asparagine" evidence="2">
    <location>
        <position position="82"/>
    </location>
</feature>
<feature type="glycosylation site" description="N-linked (GlcNAc...) asparagine" evidence="2">
    <location>
        <position position="166"/>
    </location>
</feature>
<feature type="glycosylation site" description="N-linked (GlcNAc...) asparagine" evidence="2">
    <location>
        <position position="235"/>
    </location>
</feature>
<feature type="glycosylation site" description="N-linked (GlcNAc...) asparagine" evidence="2">
    <location>
        <position position="254"/>
    </location>
</feature>
<feature type="glycosylation site" description="N-linked (GlcNAc...) asparagine" evidence="2">
    <location>
        <position position="368"/>
    </location>
</feature>
<feature type="glycosylation site" description="N-linked (GlcNAc...) asparagine" evidence="2">
    <location>
        <position position="393"/>
    </location>
</feature>
<feature type="disulfide bond" evidence="1">
    <location>
        <begin position="60"/>
        <end position="351"/>
    </location>
</feature>
<feature type="disulfide bond" evidence="1">
    <location>
        <begin position="224"/>
        <end position="238"/>
    </location>
</feature>
<feature type="disulfide bond" evidence="1">
    <location>
        <begin position="376"/>
        <end position="387"/>
    </location>
</feature>
<feature type="disulfide bond" evidence="1">
    <location>
        <begin position="381"/>
        <end position="435"/>
    </location>
</feature>
<feature type="disulfide bond" evidence="1">
    <location>
        <begin position="437"/>
        <end position="464"/>
    </location>
</feature>
<feature type="splice variant" id="VSP_042714" description="In isoform 2." evidence="7">
    <original>VSILFLIISSVASL</original>
    <variation>WRLEVWDQGISRIGFF</variation>
    <location>
        <begin position="496"/>
        <end position="509"/>
    </location>
</feature>
<feature type="sequence variant" id="VAR_064756" description="Found in a renal cell carcinoma sample; somatic mutation." evidence="3">
    <original>K</original>
    <variation>Q</variation>
    <location>
        <position position="5"/>
    </location>
</feature>
<feature type="sequence variant" id="VAR_049213" description="In dbSNP:rs34633019.">
    <original>V</original>
    <variation>A</variation>
    <location>
        <position position="47"/>
    </location>
</feature>
<feature type="mutagenesis site" description="Reduces activity by 80%." evidence="6">
    <original>D</original>
    <variation>N</variation>
    <location>
        <position position="146"/>
    </location>
</feature>
<feature type="mutagenesis site" description="Loss of activity." evidence="6">
    <original>E</original>
    <variation>Q</variation>
    <location>
        <position position="148"/>
    </location>
</feature>
<feature type="mutagenesis site" description="Reduces activity by over 90%." evidence="6">
    <original>R</original>
    <variation>G</variation>
    <location>
        <position position="211"/>
    </location>
</feature>
<feature type="mutagenesis site" description="Loss of activity." evidence="6">
    <original>E</original>
    <variation>Q</variation>
    <location>
        <position position="284"/>
    </location>
</feature>
<feature type="mutagenesis site" description="Loss of activity." evidence="6">
    <original>R</original>
    <variation>T</variation>
    <location>
        <position position="287"/>
    </location>
</feature>
<feature type="sequence conflict" description="In Ref. 2; AAC60607." evidence="8" ref="2">
    <original>P</original>
    <variation>A</variation>
    <location>
        <position position="48"/>
    </location>
</feature>
<feature type="sequence conflict" description="In Ref. 2; AAC60607." evidence="8" ref="2">
    <original>L</original>
    <variation>W</variation>
    <location>
        <position position="499"/>
    </location>
</feature>
<feature type="strand" evidence="9">
    <location>
        <begin position="48"/>
        <end position="56"/>
    </location>
</feature>
<feature type="strand" evidence="9">
    <location>
        <begin position="74"/>
        <end position="77"/>
    </location>
</feature>
<feature type="strand" evidence="9">
    <location>
        <begin position="95"/>
        <end position="97"/>
    </location>
</feature>
<feature type="strand" evidence="9">
    <location>
        <begin position="104"/>
        <end position="106"/>
    </location>
</feature>
<feature type="helix" evidence="9">
    <location>
        <begin position="122"/>
        <end position="134"/>
    </location>
</feature>
<feature type="strand" evidence="9">
    <location>
        <begin position="140"/>
        <end position="145"/>
    </location>
</feature>
<feature type="turn" evidence="9">
    <location>
        <begin position="159"/>
        <end position="162"/>
    </location>
</feature>
<feature type="helix" evidence="9">
    <location>
        <begin position="163"/>
        <end position="175"/>
    </location>
</feature>
<feature type="strand" evidence="9">
    <location>
        <begin position="177"/>
        <end position="179"/>
    </location>
</feature>
<feature type="helix" evidence="9">
    <location>
        <begin position="181"/>
        <end position="188"/>
    </location>
</feature>
<feature type="helix" evidence="9">
    <location>
        <begin position="189"/>
        <end position="191"/>
    </location>
</feature>
<feature type="helix" evidence="9">
    <location>
        <begin position="193"/>
        <end position="208"/>
    </location>
</feature>
<feature type="strand" evidence="9">
    <location>
        <begin position="214"/>
        <end position="220"/>
    </location>
</feature>
<feature type="strand" evidence="9">
    <location>
        <begin position="229"/>
        <end position="233"/>
    </location>
</feature>
<feature type="helix" evidence="9">
    <location>
        <begin position="240"/>
        <end position="248"/>
    </location>
</feature>
<feature type="helix" evidence="9">
    <location>
        <begin position="250"/>
        <end position="253"/>
    </location>
</feature>
<feature type="helix" evidence="9">
    <location>
        <begin position="271"/>
        <end position="287"/>
    </location>
</feature>
<feature type="strand" evidence="9">
    <location>
        <begin position="290"/>
        <end position="292"/>
    </location>
</feature>
<feature type="strand" evidence="9">
    <location>
        <begin position="294"/>
        <end position="296"/>
    </location>
</feature>
<feature type="strand" evidence="9">
    <location>
        <begin position="300"/>
        <end position="304"/>
    </location>
</feature>
<feature type="strand" evidence="9">
    <location>
        <begin position="309"/>
        <end position="311"/>
    </location>
</feature>
<feature type="helix" evidence="9">
    <location>
        <begin position="318"/>
        <end position="329"/>
    </location>
</feature>
<feature type="turn" evidence="9">
    <location>
        <begin position="330"/>
        <end position="332"/>
    </location>
</feature>
<feature type="strand" evidence="9">
    <location>
        <begin position="334"/>
        <end position="339"/>
    </location>
</feature>
<feature type="strand" evidence="9">
    <location>
        <begin position="342"/>
        <end position="347"/>
    </location>
</feature>
<feature type="helix" evidence="9">
    <location>
        <begin position="348"/>
        <end position="360"/>
    </location>
</feature>
<feature type="helix" evidence="9">
    <location>
        <begin position="362"/>
        <end position="380"/>
    </location>
</feature>
<feature type="strand" evidence="9">
    <location>
        <begin position="381"/>
        <end position="385"/>
    </location>
</feature>
<feature type="strand" evidence="9">
    <location>
        <begin position="388"/>
        <end position="390"/>
    </location>
</feature>
<feature type="strand" evidence="9">
    <location>
        <begin position="392"/>
        <end position="394"/>
    </location>
</feature>
<feature type="turn" evidence="9">
    <location>
        <begin position="402"/>
        <end position="404"/>
    </location>
</feature>
<feature type="strand" evidence="9">
    <location>
        <begin position="406"/>
        <end position="409"/>
    </location>
</feature>
<feature type="strand" evidence="9">
    <location>
        <begin position="415"/>
        <end position="418"/>
    </location>
</feature>
<feature type="helix" evidence="9">
    <location>
        <begin position="423"/>
        <end position="432"/>
    </location>
</feature>
<reference key="1">
    <citation type="journal article" date="1993" name="Proc. Natl. Acad. Sci. U.S.A.">
        <title>Molecular cloning of the human and monkey sperm surface protein PH-20.</title>
        <authorList>
            <person name="Lin Y."/>
            <person name="Kimmel L.H."/>
            <person name="Myles D.G."/>
            <person name="Primakoff P."/>
        </authorList>
    </citation>
    <scope>NUCLEOTIDE SEQUENCE [MRNA] (ISOFORM 1)</scope>
    <scope>TISSUE SPECIFICITY</scope>
    <source>
        <tissue>Testis</tissue>
    </source>
</reference>
<reference key="2">
    <citation type="journal article" date="1993" name="FEBS Lett.">
        <title>The human sperm protein PH-20 has hyaluronidase activity.</title>
        <authorList>
            <person name="Gmachl M."/>
            <person name="Sagan S."/>
            <person name="Ketter S."/>
            <person name="Kreil G."/>
        </authorList>
    </citation>
    <scope>NUCLEOTIDE SEQUENCE [MRNA] (ISOFORM 1)</scope>
    <scope>FUNCTION</scope>
    <source>
        <tissue>Testis</tissue>
    </source>
</reference>
<reference key="3">
    <citation type="journal article" date="1995" name="Genomics">
        <title>Expression analysis, genomic structure, and mapping to 7q31 of the human sperm adhesion molecule gene SPAM1.</title>
        <authorList>
            <person name="Jones M.H."/>
            <person name="Davey P.M."/>
            <person name="Aplin H."/>
            <person name="Affara N.A."/>
        </authorList>
    </citation>
    <scope>NUCLEOTIDE SEQUENCE [MRNA] (ISOFORM 1)</scope>
    <source>
        <tissue>Testis</tissue>
    </source>
</reference>
<reference key="4">
    <citation type="journal article" date="2003" name="Nature">
        <title>The DNA sequence of human chromosome 7.</title>
        <authorList>
            <person name="Hillier L.W."/>
            <person name="Fulton R.S."/>
            <person name="Fulton L.A."/>
            <person name="Graves T.A."/>
            <person name="Pepin K.H."/>
            <person name="Wagner-McPherson C."/>
            <person name="Layman D."/>
            <person name="Maas J."/>
            <person name="Jaeger S."/>
            <person name="Walker R."/>
            <person name="Wylie K."/>
            <person name="Sekhon M."/>
            <person name="Becker M.C."/>
            <person name="O'Laughlin M.D."/>
            <person name="Schaller M.E."/>
            <person name="Fewell G.A."/>
            <person name="Delehaunty K.D."/>
            <person name="Miner T.L."/>
            <person name="Nash W.E."/>
            <person name="Cordes M."/>
            <person name="Du H."/>
            <person name="Sun H."/>
            <person name="Edwards J."/>
            <person name="Bradshaw-Cordum H."/>
            <person name="Ali J."/>
            <person name="Andrews S."/>
            <person name="Isak A."/>
            <person name="Vanbrunt A."/>
            <person name="Nguyen C."/>
            <person name="Du F."/>
            <person name="Lamar B."/>
            <person name="Courtney L."/>
            <person name="Kalicki J."/>
            <person name="Ozersky P."/>
            <person name="Bielicki L."/>
            <person name="Scott K."/>
            <person name="Holmes A."/>
            <person name="Harkins R."/>
            <person name="Harris A."/>
            <person name="Strong C.M."/>
            <person name="Hou S."/>
            <person name="Tomlinson C."/>
            <person name="Dauphin-Kohlberg S."/>
            <person name="Kozlowicz-Reilly A."/>
            <person name="Leonard S."/>
            <person name="Rohlfing T."/>
            <person name="Rock S.M."/>
            <person name="Tin-Wollam A.-M."/>
            <person name="Abbott A."/>
            <person name="Minx P."/>
            <person name="Maupin R."/>
            <person name="Strowmatt C."/>
            <person name="Latreille P."/>
            <person name="Miller N."/>
            <person name="Johnson D."/>
            <person name="Murray J."/>
            <person name="Woessner J.P."/>
            <person name="Wendl M.C."/>
            <person name="Yang S.-P."/>
            <person name="Schultz B.R."/>
            <person name="Wallis J.W."/>
            <person name="Spieth J."/>
            <person name="Bieri T.A."/>
            <person name="Nelson J.O."/>
            <person name="Berkowicz N."/>
            <person name="Wohldmann P.E."/>
            <person name="Cook L.L."/>
            <person name="Hickenbotham M.T."/>
            <person name="Eldred J."/>
            <person name="Williams D."/>
            <person name="Bedell J.A."/>
            <person name="Mardis E.R."/>
            <person name="Clifton S.W."/>
            <person name="Chissoe S.L."/>
            <person name="Marra M.A."/>
            <person name="Raymond C."/>
            <person name="Haugen E."/>
            <person name="Gillett W."/>
            <person name="Zhou Y."/>
            <person name="James R."/>
            <person name="Phelps K."/>
            <person name="Iadanoto S."/>
            <person name="Bubb K."/>
            <person name="Simms E."/>
            <person name="Levy R."/>
            <person name="Clendenning J."/>
            <person name="Kaul R."/>
            <person name="Kent W.J."/>
            <person name="Furey T.S."/>
            <person name="Baertsch R.A."/>
            <person name="Brent M.R."/>
            <person name="Keibler E."/>
            <person name="Flicek P."/>
            <person name="Bork P."/>
            <person name="Suyama M."/>
            <person name="Bailey J.A."/>
            <person name="Portnoy M.E."/>
            <person name="Torrents D."/>
            <person name="Chinwalla A.T."/>
            <person name="Gish W.R."/>
            <person name="Eddy S.R."/>
            <person name="McPherson J.D."/>
            <person name="Olson M.V."/>
            <person name="Eichler E.E."/>
            <person name="Green E.D."/>
            <person name="Waterston R.H."/>
            <person name="Wilson R.K."/>
        </authorList>
    </citation>
    <scope>NUCLEOTIDE SEQUENCE [LARGE SCALE GENOMIC DNA]</scope>
</reference>
<reference key="5">
    <citation type="journal article" date="2003" name="Science">
        <title>Human chromosome 7: DNA sequence and biology.</title>
        <authorList>
            <person name="Scherer S.W."/>
            <person name="Cheung J."/>
            <person name="MacDonald J.R."/>
            <person name="Osborne L.R."/>
            <person name="Nakabayashi K."/>
            <person name="Herbrick J.-A."/>
            <person name="Carson A.R."/>
            <person name="Parker-Katiraee L."/>
            <person name="Skaug J."/>
            <person name="Khaja R."/>
            <person name="Zhang J."/>
            <person name="Hudek A.K."/>
            <person name="Li M."/>
            <person name="Haddad M."/>
            <person name="Duggan G.E."/>
            <person name="Fernandez B.A."/>
            <person name="Kanematsu E."/>
            <person name="Gentles S."/>
            <person name="Christopoulos C.C."/>
            <person name="Choufani S."/>
            <person name="Kwasnicka D."/>
            <person name="Zheng X.H."/>
            <person name="Lai Z."/>
            <person name="Nusskern D.R."/>
            <person name="Zhang Q."/>
            <person name="Gu Z."/>
            <person name="Lu F."/>
            <person name="Zeesman S."/>
            <person name="Nowaczyk M.J."/>
            <person name="Teshima I."/>
            <person name="Chitayat D."/>
            <person name="Shuman C."/>
            <person name="Weksberg R."/>
            <person name="Zackai E.H."/>
            <person name="Grebe T.A."/>
            <person name="Cox S.R."/>
            <person name="Kirkpatrick S.J."/>
            <person name="Rahman N."/>
            <person name="Friedman J.M."/>
            <person name="Heng H.H.Q."/>
            <person name="Pelicci P.G."/>
            <person name="Lo-Coco F."/>
            <person name="Belloni E."/>
            <person name="Shaffer L.G."/>
            <person name="Pober B."/>
            <person name="Morton C.C."/>
            <person name="Gusella J.F."/>
            <person name="Bruns G.A.P."/>
            <person name="Korf B.R."/>
            <person name="Quade B.J."/>
            <person name="Ligon A.H."/>
            <person name="Ferguson H."/>
            <person name="Higgins A.W."/>
            <person name="Leach N.T."/>
            <person name="Herrick S.R."/>
            <person name="Lemyre E."/>
            <person name="Farra C.G."/>
            <person name="Kim H.-G."/>
            <person name="Summers A.M."/>
            <person name="Gripp K.W."/>
            <person name="Roberts W."/>
            <person name="Szatmari P."/>
            <person name="Winsor E.J.T."/>
            <person name="Grzeschik K.-H."/>
            <person name="Teebi A."/>
            <person name="Minassian B.A."/>
            <person name="Kere J."/>
            <person name="Armengol L."/>
            <person name="Pujana M.A."/>
            <person name="Estivill X."/>
            <person name="Wilson M.D."/>
            <person name="Koop B.F."/>
            <person name="Tosi S."/>
            <person name="Moore G.E."/>
            <person name="Boright A.P."/>
            <person name="Zlotorynski E."/>
            <person name="Kerem B."/>
            <person name="Kroisel P.M."/>
            <person name="Petek E."/>
            <person name="Oscier D.G."/>
            <person name="Mould S.J."/>
            <person name="Doehner H."/>
            <person name="Doehner K."/>
            <person name="Rommens J.M."/>
            <person name="Vincent J.B."/>
            <person name="Venter J.C."/>
            <person name="Li P.W."/>
            <person name="Mural R.J."/>
            <person name="Adams M.D."/>
            <person name="Tsui L.-C."/>
        </authorList>
    </citation>
    <scope>NUCLEOTIDE SEQUENCE [LARGE SCALE GENOMIC DNA]</scope>
</reference>
<reference key="6">
    <citation type="submission" date="2005-07" db="EMBL/GenBank/DDBJ databases">
        <authorList>
            <person name="Mural R.J."/>
            <person name="Istrail S."/>
            <person name="Sutton G."/>
            <person name="Florea L."/>
            <person name="Halpern A.L."/>
            <person name="Mobarry C.M."/>
            <person name="Lippert R."/>
            <person name="Walenz B."/>
            <person name="Shatkay H."/>
            <person name="Dew I."/>
            <person name="Miller J.R."/>
            <person name="Flanigan M.J."/>
            <person name="Edwards N.J."/>
            <person name="Bolanos R."/>
            <person name="Fasulo D."/>
            <person name="Halldorsson B.V."/>
            <person name="Hannenhalli S."/>
            <person name="Turner R."/>
            <person name="Yooseph S."/>
            <person name="Lu F."/>
            <person name="Nusskern D.R."/>
            <person name="Shue B.C."/>
            <person name="Zheng X.H."/>
            <person name="Zhong F."/>
            <person name="Delcher A.L."/>
            <person name="Huson D.H."/>
            <person name="Kravitz S.A."/>
            <person name="Mouchard L."/>
            <person name="Reinert K."/>
            <person name="Remington K.A."/>
            <person name="Clark A.G."/>
            <person name="Waterman M.S."/>
            <person name="Eichler E.E."/>
            <person name="Adams M.D."/>
            <person name="Hunkapiller M.W."/>
            <person name="Myers E.W."/>
            <person name="Venter J.C."/>
        </authorList>
    </citation>
    <scope>NUCLEOTIDE SEQUENCE [LARGE SCALE GENOMIC DNA]</scope>
</reference>
<reference key="7">
    <citation type="journal article" date="2004" name="Genome Res.">
        <title>The status, quality, and expansion of the NIH full-length cDNA project: the Mammalian Gene Collection (MGC).</title>
        <authorList>
            <consortium name="The MGC Project Team"/>
        </authorList>
    </citation>
    <scope>NUCLEOTIDE SEQUENCE [LARGE SCALE MRNA] (ISOFORM 2)</scope>
    <source>
        <tissue>Testis</tissue>
    </source>
</reference>
<reference key="8">
    <citation type="journal article" date="1997" name="Eur. J. Biochem.">
        <title>In vitro mutagenesis of PH-20 hyaluronidase from human sperm.</title>
        <authorList>
            <person name="Arming S."/>
            <person name="Strobl B."/>
            <person name="Wechselberger C."/>
            <person name="Kreil G."/>
        </authorList>
    </citation>
    <scope>MUTAGENESIS OF ASP-146; GLU-148; ARG-211; GLU-284 AND ARG-287</scope>
    <scope>GLYCOSYLATION</scope>
</reference>
<reference key="9">
    <citation type="journal article" date="2011" name="Nature">
        <title>Exome sequencing identifies frequent mutation of the SWI/SNF complex gene PBRM1 in renal carcinoma.</title>
        <authorList>
            <person name="Varela I."/>
            <person name="Tarpey P."/>
            <person name="Raine K."/>
            <person name="Huang D."/>
            <person name="Ong C.K."/>
            <person name="Stephens P."/>
            <person name="Davies H."/>
            <person name="Jones D."/>
            <person name="Lin M.L."/>
            <person name="Teague J."/>
            <person name="Bignell G."/>
            <person name="Butler A."/>
            <person name="Cho J."/>
            <person name="Dalgliesh G.L."/>
            <person name="Galappaththige D."/>
            <person name="Greenman C."/>
            <person name="Hardy C."/>
            <person name="Jia M."/>
            <person name="Latimer C."/>
            <person name="Lau K.W."/>
            <person name="Marshall J."/>
            <person name="McLaren S."/>
            <person name="Menzies A."/>
            <person name="Mudie L."/>
            <person name="Stebbings L."/>
            <person name="Largaespada D.A."/>
            <person name="Wessels L.F.A."/>
            <person name="Richard S."/>
            <person name="Kahnoski R.J."/>
            <person name="Anema J."/>
            <person name="Tuveson D.A."/>
            <person name="Perez-Mancera P.A."/>
            <person name="Mustonen V."/>
            <person name="Fischer A."/>
            <person name="Adams D.J."/>
            <person name="Rust A."/>
            <person name="Chan-On W."/>
            <person name="Subimerb C."/>
            <person name="Dykema K."/>
            <person name="Furge K."/>
            <person name="Campbell P.J."/>
            <person name="Teh B.T."/>
            <person name="Stratton M.R."/>
            <person name="Futreal P.A."/>
        </authorList>
    </citation>
    <scope>VARIANT GLN-5</scope>
</reference>
<name>HYALP_HUMAN</name>
<gene>
    <name type="primary">SPAM1</name>
    <name type="synonym">HYAL3</name>
    <name type="synonym">PH20</name>
</gene>
<evidence type="ECO:0000250" key="1"/>
<evidence type="ECO:0000255" key="2"/>
<evidence type="ECO:0000269" key="3">
    <source>
    </source>
</evidence>
<evidence type="ECO:0000269" key="4">
    <source>
    </source>
</evidence>
<evidence type="ECO:0000269" key="5">
    <source>
    </source>
</evidence>
<evidence type="ECO:0000269" key="6">
    <source>
    </source>
</evidence>
<evidence type="ECO:0000303" key="7">
    <source>
    </source>
</evidence>
<evidence type="ECO:0000305" key="8"/>
<evidence type="ECO:0007829" key="9">
    <source>
        <dbReference type="PDB" id="9JUB"/>
    </source>
</evidence>
<organism>
    <name type="scientific">Homo sapiens</name>
    <name type="common">Human</name>
    <dbReference type="NCBI Taxonomy" id="9606"/>
    <lineage>
        <taxon>Eukaryota</taxon>
        <taxon>Metazoa</taxon>
        <taxon>Chordata</taxon>
        <taxon>Craniata</taxon>
        <taxon>Vertebrata</taxon>
        <taxon>Euteleostomi</taxon>
        <taxon>Mammalia</taxon>
        <taxon>Eutheria</taxon>
        <taxon>Euarchontoglires</taxon>
        <taxon>Primates</taxon>
        <taxon>Haplorrhini</taxon>
        <taxon>Catarrhini</taxon>
        <taxon>Hominidae</taxon>
        <taxon>Homo</taxon>
    </lineage>
</organism>
<sequence length="509" mass="57848">MGVLKFKHIFFRSFVKSSGVSQIVFTFLLIPCCLTLNFRAPPVIPNVPFLWAWNAPSEFCLGKFDEPLDMSLFSFIGSPRINATGQGVTIFYVDRLGYYPYIDSITGVTVNGGIPQKISLQDHLDKAKKDITFYMPVDNLGMAVIDWEEWRPTWARNWKPKDVYKNRSIELVQQQNVQLSLTEATEKAKQEFEKAGKDFLVETIKLGKLLRPNHLWGYYLFPDCYNHHYKKPGYNGSCFNVEIKRNDDLSWLWNESTALYPSIYLNTQQSPVAATLYVRNRVREAIRVSKIPDAKSPLPVFAYTRIVFTDQVLKFLSQDELVYTFGETVALGASGIVIWGTLSIMRSMKSCLLLDNYMETILNPYIINVTLAAKMCSQVLCQEQGVCIRKNWNSSDYLHLNPDNFAIQLEKGGKFTVRGKPTLEDLEQFSEKFYCSCYSTLSCKEKADVKDTDAVDVCIADGVCIDAFLKPPMETEEPQIFYNASPSTLSATMFIVSILFLIISSVASL</sequence>
<accession>P38567</accession>
<accession>Q8TC30</accession>
<protein>
    <recommendedName>
        <fullName>Hyaluronidase PH-20</fullName>
        <shortName>Hyal-PH20</shortName>
        <ecNumber>3.2.1.35</ecNumber>
    </recommendedName>
    <alternativeName>
        <fullName>Hyaluronoglucosaminidase PH-20</fullName>
    </alternativeName>
    <alternativeName>
        <fullName>Sperm adhesion molecule 1</fullName>
    </alternativeName>
    <alternativeName>
        <fullName>Sperm surface protein PH-20</fullName>
    </alternativeName>
</protein>
<keyword id="KW-0002">3D-structure</keyword>
<keyword id="KW-0025">Alternative splicing</keyword>
<keyword id="KW-0130">Cell adhesion</keyword>
<keyword id="KW-1003">Cell membrane</keyword>
<keyword id="KW-1015">Disulfide bond</keyword>
<keyword id="KW-0325">Glycoprotein</keyword>
<keyword id="KW-0326">Glycosidase</keyword>
<keyword id="KW-0336">GPI-anchor</keyword>
<keyword id="KW-0378">Hydrolase</keyword>
<keyword id="KW-0449">Lipoprotein</keyword>
<keyword id="KW-0472">Membrane</keyword>
<keyword id="KW-1267">Proteomics identification</keyword>
<keyword id="KW-1185">Reference proteome</keyword>
<keyword id="KW-0732">Signal</keyword>
<proteinExistence type="evidence at protein level"/>
<comment type="function">
    <text evidence="5">Involved in sperm-egg adhesion. Upon fertilization sperm must first penetrate a layer of cumulus cells that surrounds the egg before reaching the zona pellucida. The cumulus cells are embedded in a matrix containing hyaluronic acid which is formed prior to ovulation. This protein aids in penetrating the layer of cumulus cells by digesting hyaluronic acid.</text>
</comment>
<comment type="catalytic activity">
    <reaction>
        <text>Random hydrolysis of (1-&gt;4)-linkages between N-acetyl-beta-D-glucosamine and D-glucuronate residues in hyaluronate.</text>
        <dbReference type="EC" id="3.2.1.35"/>
    </reaction>
</comment>
<comment type="subcellular location">
    <subcellularLocation>
        <location>Cell membrane</location>
        <topology>Lipid-anchor</topology>
        <topology>GPI-anchor</topology>
    </subcellularLocation>
</comment>
<comment type="alternative products">
    <event type="alternative splicing"/>
    <isoform>
        <id>P38567-1</id>
        <name>1</name>
        <sequence type="displayed"/>
    </isoform>
    <isoform>
        <id>P38567-2</id>
        <name>2</name>
        <sequence type="described" ref="VSP_042714"/>
    </isoform>
</comment>
<comment type="tissue specificity">
    <text evidence="4">Testis.</text>
</comment>
<comment type="PTM">
    <text evidence="6">N-glycosylated.</text>
</comment>
<comment type="similarity">
    <text evidence="8">Belongs to the glycosyl hydrolase 56 family.</text>
</comment>
<comment type="online information" name="Atlas of Genetics and Cytogenetics in Oncology and Haematology">
    <link uri="https://atlasgeneticsoncology.org/gene/42361/SPAM1"/>
</comment>